<reference key="1">
    <citation type="journal article" date="2012" name="BMC Genomics">
        <title>Comparative genomics and transcriptomics of lineages I, II, and III strains of Listeria monocytogenes.</title>
        <authorList>
            <person name="Hain T."/>
            <person name="Ghai R."/>
            <person name="Billion A."/>
            <person name="Kuenne C.T."/>
            <person name="Steinweg C."/>
            <person name="Izar B."/>
            <person name="Mohamed W."/>
            <person name="Mraheil M."/>
            <person name="Domann E."/>
            <person name="Schaffrath S."/>
            <person name="Karst U."/>
            <person name="Goesmann A."/>
            <person name="Oehm S."/>
            <person name="Puhler A."/>
            <person name="Merkl R."/>
            <person name="Vorwerk S."/>
            <person name="Glaser P."/>
            <person name="Garrido P."/>
            <person name="Rusniok C."/>
            <person name="Buchrieser C."/>
            <person name="Goebel W."/>
            <person name="Chakraborty T."/>
        </authorList>
    </citation>
    <scope>NUCLEOTIDE SEQUENCE [LARGE SCALE GENOMIC DNA]</scope>
    <source>
        <strain>CLIP80459</strain>
    </source>
</reference>
<gene>
    <name evidence="1" type="primary">chdC</name>
    <name type="ordered locus">Lm4b_02135</name>
</gene>
<proteinExistence type="inferred from homology"/>
<sequence length="251" mass="28850">MNEAVKTLDGWFCLHDFRSIDWAAWRELNPGNQELMLNELSHFLSDMEITKNIGEGEHTIYSILGQKADLVFFTLRDSLEALNEVENRFNKLAIADYLLPTYSYISVVELSNYLASHMAGGEDPYQNKGVRARLYPALPPKKHICFYPMSKKRDGADNWYMLPMEERQQLIRDHGLIGRSYAGKVQQIIGGSIGFDDYEWGVTLFSDDALEFKRIVTEMRFDEASARYAEFGSFFIGNLLPSEQLSKLFTI</sequence>
<accession>C1KX66</accession>
<evidence type="ECO:0000255" key="1">
    <source>
        <dbReference type="HAMAP-Rule" id="MF_01442"/>
    </source>
</evidence>
<feature type="chain" id="PRO_1000215290" description="Coproheme decarboxylase">
    <location>
        <begin position="1"/>
        <end position="251"/>
    </location>
</feature>
<feature type="active site" evidence="1">
    <location>
        <position position="147"/>
    </location>
</feature>
<feature type="binding site" evidence="1">
    <location>
        <position position="133"/>
    </location>
    <ligand>
        <name>Fe-coproporphyrin III</name>
        <dbReference type="ChEBI" id="CHEBI:68438"/>
    </ligand>
</feature>
<feature type="binding site" evidence="1">
    <location>
        <begin position="147"/>
        <end position="151"/>
    </location>
    <ligand>
        <name>Fe-coproporphyrin III</name>
        <dbReference type="ChEBI" id="CHEBI:68438"/>
    </ligand>
</feature>
<feature type="binding site" description="axial binding residue" evidence="1">
    <location>
        <position position="174"/>
    </location>
    <ligand>
        <name>Fe-coproporphyrin III</name>
        <dbReference type="ChEBI" id="CHEBI:68438"/>
    </ligand>
    <ligandPart>
        <name>Fe</name>
        <dbReference type="ChEBI" id="CHEBI:18248"/>
    </ligandPart>
</feature>
<feature type="binding site" evidence="1">
    <location>
        <position position="187"/>
    </location>
    <ligand>
        <name>Fe-coproporphyrin III</name>
        <dbReference type="ChEBI" id="CHEBI:68438"/>
    </ligand>
</feature>
<feature type="binding site" evidence="1">
    <location>
        <position position="225"/>
    </location>
    <ligand>
        <name>Fe-coproporphyrin III</name>
        <dbReference type="ChEBI" id="CHEBI:68438"/>
    </ligand>
</feature>
<comment type="function">
    <text evidence="1">Involved in coproporphyrin-dependent heme b biosynthesis. Catalyzes the decarboxylation of Fe-coproporphyrin III (coproheme) to heme b (protoheme IX), the last step of the pathway. The reaction occurs in a stepwise manner with a three-propionate intermediate.</text>
</comment>
<comment type="catalytic activity">
    <reaction evidence="1">
        <text>Fe-coproporphyrin III + 2 H2O2 + 2 H(+) = heme b + 2 CO2 + 4 H2O</text>
        <dbReference type="Rhea" id="RHEA:56516"/>
        <dbReference type="ChEBI" id="CHEBI:15377"/>
        <dbReference type="ChEBI" id="CHEBI:15378"/>
        <dbReference type="ChEBI" id="CHEBI:16240"/>
        <dbReference type="ChEBI" id="CHEBI:16526"/>
        <dbReference type="ChEBI" id="CHEBI:60344"/>
        <dbReference type="ChEBI" id="CHEBI:68438"/>
        <dbReference type="EC" id="1.3.98.5"/>
    </reaction>
    <physiologicalReaction direction="left-to-right" evidence="1">
        <dbReference type="Rhea" id="RHEA:56517"/>
    </physiologicalReaction>
</comment>
<comment type="catalytic activity">
    <reaction evidence="1">
        <text>Fe-coproporphyrin III + H2O2 + H(+) = harderoheme III + CO2 + 2 H2O</text>
        <dbReference type="Rhea" id="RHEA:57940"/>
        <dbReference type="ChEBI" id="CHEBI:15377"/>
        <dbReference type="ChEBI" id="CHEBI:15378"/>
        <dbReference type="ChEBI" id="CHEBI:16240"/>
        <dbReference type="ChEBI" id="CHEBI:16526"/>
        <dbReference type="ChEBI" id="CHEBI:68438"/>
        <dbReference type="ChEBI" id="CHEBI:142463"/>
    </reaction>
    <physiologicalReaction direction="left-to-right" evidence="1">
        <dbReference type="Rhea" id="RHEA:57941"/>
    </physiologicalReaction>
</comment>
<comment type="catalytic activity">
    <reaction evidence="1">
        <text>harderoheme III + H2O2 + H(+) = heme b + CO2 + 2 H2O</text>
        <dbReference type="Rhea" id="RHEA:57944"/>
        <dbReference type="ChEBI" id="CHEBI:15377"/>
        <dbReference type="ChEBI" id="CHEBI:15378"/>
        <dbReference type="ChEBI" id="CHEBI:16240"/>
        <dbReference type="ChEBI" id="CHEBI:16526"/>
        <dbReference type="ChEBI" id="CHEBI:60344"/>
        <dbReference type="ChEBI" id="CHEBI:142463"/>
    </reaction>
    <physiologicalReaction direction="left-to-right" evidence="1">
        <dbReference type="Rhea" id="RHEA:57945"/>
    </physiologicalReaction>
</comment>
<comment type="cofactor">
    <cofactor evidence="1">
        <name>Fe-coproporphyrin III</name>
        <dbReference type="ChEBI" id="CHEBI:68438"/>
    </cofactor>
    <text evidence="1">Fe-coproporphyrin III acts both as a substrate and a redox cofactor.</text>
</comment>
<comment type="pathway">
    <text evidence="1">Porphyrin-containing compound metabolism; protoheme biosynthesis.</text>
</comment>
<comment type="similarity">
    <text evidence="1">Belongs to the ChdC family. Type 1 subfamily.</text>
</comment>
<name>CHDC_LISMC</name>
<organism>
    <name type="scientific">Listeria monocytogenes serotype 4b (strain CLIP80459)</name>
    <dbReference type="NCBI Taxonomy" id="568819"/>
    <lineage>
        <taxon>Bacteria</taxon>
        <taxon>Bacillati</taxon>
        <taxon>Bacillota</taxon>
        <taxon>Bacilli</taxon>
        <taxon>Bacillales</taxon>
        <taxon>Listeriaceae</taxon>
        <taxon>Listeria</taxon>
    </lineage>
</organism>
<protein>
    <recommendedName>
        <fullName evidence="1">Coproheme decarboxylase</fullName>
        <ecNumber evidence="1">1.3.98.5</ecNumber>
    </recommendedName>
    <alternativeName>
        <fullName evidence="1">Coproheme III oxidative decarboxylase</fullName>
    </alternativeName>
    <alternativeName>
        <fullName evidence="1">Hydrogen peroxide-dependent heme synthase</fullName>
    </alternativeName>
</protein>
<dbReference type="EC" id="1.3.98.5" evidence="1"/>
<dbReference type="EMBL" id="FM242711">
    <property type="protein sequence ID" value="CAS05895.1"/>
    <property type="molecule type" value="Genomic_DNA"/>
</dbReference>
<dbReference type="SMR" id="C1KX66"/>
<dbReference type="KEGG" id="lmc:Lm4b_02135"/>
<dbReference type="HOGENOM" id="CLU_063226_1_0_9"/>
<dbReference type="UniPathway" id="UPA00252"/>
<dbReference type="GO" id="GO:0020037">
    <property type="term" value="F:heme binding"/>
    <property type="evidence" value="ECO:0007669"/>
    <property type="project" value="InterPro"/>
</dbReference>
<dbReference type="GO" id="GO:0046872">
    <property type="term" value="F:metal ion binding"/>
    <property type="evidence" value="ECO:0007669"/>
    <property type="project" value="UniProtKB-KW"/>
</dbReference>
<dbReference type="GO" id="GO:0016634">
    <property type="term" value="F:oxidoreductase activity, acting on the CH-CH group of donors, oxygen as acceptor"/>
    <property type="evidence" value="ECO:0007669"/>
    <property type="project" value="UniProtKB-UniRule"/>
</dbReference>
<dbReference type="GO" id="GO:0004601">
    <property type="term" value="F:peroxidase activity"/>
    <property type="evidence" value="ECO:0007669"/>
    <property type="project" value="InterPro"/>
</dbReference>
<dbReference type="GO" id="GO:0006785">
    <property type="term" value="P:heme B biosynthetic process"/>
    <property type="evidence" value="ECO:0007669"/>
    <property type="project" value="UniProtKB-UniRule"/>
</dbReference>
<dbReference type="Gene3D" id="3.30.70.1030">
    <property type="entry name" value="Apc35880, domain 1"/>
    <property type="match status" value="2"/>
</dbReference>
<dbReference type="HAMAP" id="MF_01442">
    <property type="entry name" value="Coproheme_decarbox_1"/>
    <property type="match status" value="1"/>
</dbReference>
<dbReference type="InterPro" id="IPR031332">
    <property type="entry name" value="CHDC"/>
</dbReference>
<dbReference type="InterPro" id="IPR010644">
    <property type="entry name" value="ChdC/CLD"/>
</dbReference>
<dbReference type="InterPro" id="IPR011008">
    <property type="entry name" value="Dimeric_a/b-barrel"/>
</dbReference>
<dbReference type="NCBIfam" id="NF008913">
    <property type="entry name" value="PRK12276.1"/>
    <property type="match status" value="1"/>
</dbReference>
<dbReference type="PANTHER" id="PTHR36843:SF1">
    <property type="entry name" value="COPROHEME DECARBOXYLASE"/>
    <property type="match status" value="1"/>
</dbReference>
<dbReference type="PANTHER" id="PTHR36843">
    <property type="entry name" value="HEME-DEPENDENT PEROXIDASE YWFI-RELATED"/>
    <property type="match status" value="1"/>
</dbReference>
<dbReference type="Pfam" id="PF06778">
    <property type="entry name" value="Chlor_dismutase"/>
    <property type="match status" value="1"/>
</dbReference>
<dbReference type="SUPFAM" id="SSF54909">
    <property type="entry name" value="Dimeric alpha+beta barrel"/>
    <property type="match status" value="1"/>
</dbReference>
<keyword id="KW-0349">Heme</keyword>
<keyword id="KW-0350">Heme biosynthesis</keyword>
<keyword id="KW-0408">Iron</keyword>
<keyword id="KW-0479">Metal-binding</keyword>
<keyword id="KW-0560">Oxidoreductase</keyword>